<evidence type="ECO:0000250" key="1">
    <source>
        <dbReference type="UniProtKB" id="A1L271"/>
    </source>
</evidence>
<evidence type="ECO:0000250" key="2">
    <source>
        <dbReference type="UniProtKB" id="O14775"/>
    </source>
</evidence>
<evidence type="ECO:0000250" key="3">
    <source>
        <dbReference type="UniProtKB" id="P62881"/>
    </source>
</evidence>
<evidence type="ECO:0000305" key="4"/>
<name>GNB5_RABIT</name>
<feature type="chain" id="PRO_0000127708" description="Guanine nucleotide-binding protein subunit beta-5">
    <location>
        <begin position="1"/>
        <end position="353"/>
    </location>
</feature>
<feature type="repeat" description="WD 1">
    <location>
        <begin position="61"/>
        <end position="100"/>
    </location>
</feature>
<feature type="repeat" description="WD 2">
    <location>
        <begin position="103"/>
        <end position="142"/>
    </location>
</feature>
<feature type="repeat" description="WD 3">
    <location>
        <begin position="151"/>
        <end position="192"/>
    </location>
</feature>
<feature type="repeat" description="WD 4">
    <location>
        <begin position="194"/>
        <end position="236"/>
    </location>
</feature>
<feature type="repeat" description="WD 5">
    <location>
        <begin position="237"/>
        <end position="276"/>
    </location>
</feature>
<feature type="repeat" description="WD 6">
    <location>
        <begin position="278"/>
        <end position="320"/>
    </location>
</feature>
<feature type="repeat" description="WD 7">
    <location>
        <begin position="323"/>
        <end position="352"/>
    </location>
</feature>
<gene>
    <name type="primary">GNB5</name>
</gene>
<dbReference type="EMBL" id="AY591252">
    <property type="protein sequence ID" value="AAT02217.1"/>
    <property type="molecule type" value="mRNA"/>
</dbReference>
<dbReference type="RefSeq" id="NP_001075639.1">
    <property type="nucleotide sequence ID" value="NM_001082170.1"/>
</dbReference>
<dbReference type="SMR" id="Q6PNB6"/>
<dbReference type="STRING" id="9986.ENSOCUP00000010220"/>
<dbReference type="PaxDb" id="9986-ENSOCUP00000010220"/>
<dbReference type="GeneID" id="100008941"/>
<dbReference type="KEGG" id="ocu:100008941"/>
<dbReference type="CTD" id="10681"/>
<dbReference type="eggNOG" id="KOG0286">
    <property type="taxonomic scope" value="Eukaryota"/>
</dbReference>
<dbReference type="InParanoid" id="Q6PNB6"/>
<dbReference type="OrthoDB" id="10255630at2759"/>
<dbReference type="Proteomes" id="UP000001811">
    <property type="component" value="Unplaced"/>
</dbReference>
<dbReference type="GO" id="GO:0005634">
    <property type="term" value="C:nucleus"/>
    <property type="evidence" value="ECO:0000250"/>
    <property type="project" value="AgBase"/>
</dbReference>
<dbReference type="GO" id="GO:0005886">
    <property type="term" value="C:plasma membrane"/>
    <property type="evidence" value="ECO:0000250"/>
    <property type="project" value="AgBase"/>
</dbReference>
<dbReference type="GO" id="GO:0031682">
    <property type="term" value="F:G-protein gamma-subunit binding"/>
    <property type="evidence" value="ECO:0000250"/>
    <property type="project" value="CAFA"/>
</dbReference>
<dbReference type="GO" id="GO:0051087">
    <property type="term" value="F:protein-folding chaperone binding"/>
    <property type="evidence" value="ECO:0000250"/>
    <property type="project" value="CAFA"/>
</dbReference>
<dbReference type="GO" id="GO:0007212">
    <property type="term" value="P:G protein-coupled dopamine receptor signaling pathway"/>
    <property type="evidence" value="ECO:0000250"/>
    <property type="project" value="UniProtKB"/>
</dbReference>
<dbReference type="GO" id="GO:0007186">
    <property type="term" value="P:G protein-coupled receptor signaling pathway"/>
    <property type="evidence" value="ECO:0000250"/>
    <property type="project" value="AgBase"/>
</dbReference>
<dbReference type="GO" id="GO:1901386">
    <property type="term" value="P:negative regulation of voltage-gated calcium channel activity"/>
    <property type="evidence" value="ECO:0000250"/>
    <property type="project" value="CAFA"/>
</dbReference>
<dbReference type="CDD" id="cd00200">
    <property type="entry name" value="WD40"/>
    <property type="match status" value="1"/>
</dbReference>
<dbReference type="FunFam" id="2.130.10.10:FF:000020">
    <property type="entry name" value="Guanine nucleotide-binding protein beta subunit"/>
    <property type="match status" value="1"/>
</dbReference>
<dbReference type="Gene3D" id="2.130.10.10">
    <property type="entry name" value="YVTN repeat-like/Quinoprotein amine dehydrogenase"/>
    <property type="match status" value="1"/>
</dbReference>
<dbReference type="InterPro" id="IPR020472">
    <property type="entry name" value="G-protein_beta_WD-40_rep"/>
</dbReference>
<dbReference type="InterPro" id="IPR001632">
    <property type="entry name" value="Gprotein_B"/>
</dbReference>
<dbReference type="InterPro" id="IPR016346">
    <property type="entry name" value="Guanine_nucleotide-bd_bsu"/>
</dbReference>
<dbReference type="InterPro" id="IPR015943">
    <property type="entry name" value="WD40/YVTN_repeat-like_dom_sf"/>
</dbReference>
<dbReference type="InterPro" id="IPR019775">
    <property type="entry name" value="WD40_repeat_CS"/>
</dbReference>
<dbReference type="InterPro" id="IPR036322">
    <property type="entry name" value="WD40_repeat_dom_sf"/>
</dbReference>
<dbReference type="InterPro" id="IPR001680">
    <property type="entry name" value="WD40_rpt"/>
</dbReference>
<dbReference type="PANTHER" id="PTHR19850">
    <property type="entry name" value="GUANINE NUCLEOTIDE-BINDING PROTEIN BETA G PROTEIN BETA"/>
    <property type="match status" value="1"/>
</dbReference>
<dbReference type="Pfam" id="PF25391">
    <property type="entry name" value="WD40_Gbeta"/>
    <property type="match status" value="1"/>
</dbReference>
<dbReference type="PIRSF" id="PIRSF002394">
    <property type="entry name" value="GN-bd_beta"/>
    <property type="match status" value="1"/>
</dbReference>
<dbReference type="PRINTS" id="PR00319">
    <property type="entry name" value="GPROTEINB"/>
</dbReference>
<dbReference type="PRINTS" id="PR00320">
    <property type="entry name" value="GPROTEINBRPT"/>
</dbReference>
<dbReference type="SMART" id="SM00320">
    <property type="entry name" value="WD40"/>
    <property type="match status" value="7"/>
</dbReference>
<dbReference type="SUPFAM" id="SSF50978">
    <property type="entry name" value="WD40 repeat-like"/>
    <property type="match status" value="1"/>
</dbReference>
<dbReference type="PROSITE" id="PS00678">
    <property type="entry name" value="WD_REPEATS_1"/>
    <property type="match status" value="3"/>
</dbReference>
<dbReference type="PROSITE" id="PS50082">
    <property type="entry name" value="WD_REPEATS_2"/>
    <property type="match status" value="6"/>
</dbReference>
<dbReference type="PROSITE" id="PS50294">
    <property type="entry name" value="WD_REPEATS_REGION"/>
    <property type="match status" value="1"/>
</dbReference>
<reference key="1">
    <citation type="submission" date="2004-04" db="EMBL/GenBank/DDBJ databases">
        <title>Molecular cloning of guanine nucleotide binding protein beta 5.</title>
        <authorList>
            <person name="Zhou H."/>
        </authorList>
    </citation>
    <scope>NUCLEOTIDE SEQUENCE [MRNA]</scope>
</reference>
<organism>
    <name type="scientific">Oryctolagus cuniculus</name>
    <name type="common">Rabbit</name>
    <dbReference type="NCBI Taxonomy" id="9986"/>
    <lineage>
        <taxon>Eukaryota</taxon>
        <taxon>Metazoa</taxon>
        <taxon>Chordata</taxon>
        <taxon>Craniata</taxon>
        <taxon>Vertebrata</taxon>
        <taxon>Euteleostomi</taxon>
        <taxon>Mammalia</taxon>
        <taxon>Eutheria</taxon>
        <taxon>Euarchontoglires</taxon>
        <taxon>Glires</taxon>
        <taxon>Lagomorpha</taxon>
        <taxon>Leporidae</taxon>
        <taxon>Oryctolagus</taxon>
    </lineage>
</organism>
<sequence length="353" mass="38756">MATDGLHENETLASLKIEAESLKGKLEEERAKLHDVELHQVAERVEALGQFVMKTRRTLKGHGNKVLCMDWCKDKRRIVSSSQDGKVIVWDSFTTNKEHAVTMPCTWVMACAYAPSGCAIACGGLDNKCSVYPLTFDKNENMAAKKKSVAMHTNYLSACSFTNSDMQILTASGDGTCALWDVESGQLLQSFHGHGADVLCLDLAPSETGNTFVSGGCDKKAMVWDMRSGQCVQAFETHESDINSVRYYPSGDAFASGSDDATCRLYDLRADREVAIYSKESIIFGASSVDFSLSGRLLFAGYNDYTINVWDVLKGARVSILFGHENRVSTLRVSPDGTAFCSGSWDHTLRVWA</sequence>
<keyword id="KW-0472">Membrane</keyword>
<keyword id="KW-1185">Reference proteome</keyword>
<keyword id="KW-0677">Repeat</keyword>
<keyword id="KW-0807">Transducer</keyword>
<keyword id="KW-0853">WD repeat</keyword>
<protein>
    <recommendedName>
        <fullName>Guanine nucleotide-binding protein subunit beta-5</fullName>
    </recommendedName>
    <alternativeName>
        <fullName>Gbeta5</fullName>
    </alternativeName>
    <alternativeName>
        <fullName>Transducin beta chain 5</fullName>
    </alternativeName>
</protein>
<proteinExistence type="evidence at transcript level"/>
<accession>Q6PNB6</accession>
<comment type="function">
    <text evidence="1 2 3">Enhances GTPase-activating protein (GAP) activity of regulator of G protein signaling (RGS) proteins, such as RGS7 and RGS9, hence involved in the termination of the signaling initiated by the G protein coupled receptors (GPCRs) by accelerating the GTP hydrolysis on the G-alpha subunits, thereby promoting their inactivation (By similarity). Increases RGS7 GTPase-activating protein (GAP) activity, thereby regulating mood and cognition (By similarity). Increases RGS9 GTPase-activating protein (GAP) activity, hence contributes to the deactivation of G protein signaling initiated by D(2) dopamine receptors (By similarity). May play an important role in neuronal signaling, including in the parasympathetic, but not sympathetic, control of heart rate (By similarity).</text>
</comment>
<comment type="subunit">
    <text evidence="2">Component of a complex composed of RGS9 (isoform RGS9-1), GNB5 and RGS9BP; within this complex, the presence of GNB5 stabilizes both itself and RGS9 and increases RGS9 GTPase-activating protein (GAP) activity. Interacts with RGS7, forming the RGS7-GNB5 complex; within this complex, the presence of GNB5 increases RGS7 GTPase-activating protein (GAP) activity. Interacts with GPR158; promotes the GTPase activator activity of the RGS7-GNB5 complex in absence of glycine, in contrast GTPase activator activity of the RGS7-GNB5 complex is inhibited in presence of glycine. Interacts with RGS6.</text>
</comment>
<comment type="subcellular location">
    <subcellularLocation>
        <location evidence="3">Membrane</location>
    </subcellularLocation>
</comment>
<comment type="similarity">
    <text evidence="4">Belongs to the WD repeat G protein beta family.</text>
</comment>